<organism>
    <name type="scientific">Schistocerca americana</name>
    <name type="common">American grasshopper</name>
    <dbReference type="NCBI Taxonomy" id="7009"/>
    <lineage>
        <taxon>Eukaryota</taxon>
        <taxon>Metazoa</taxon>
        <taxon>Ecdysozoa</taxon>
        <taxon>Arthropoda</taxon>
        <taxon>Hexapoda</taxon>
        <taxon>Insecta</taxon>
        <taxon>Pterygota</taxon>
        <taxon>Neoptera</taxon>
        <taxon>Polyneoptera</taxon>
        <taxon>Orthoptera</taxon>
        <taxon>Caelifera</taxon>
        <taxon>Acrididea</taxon>
        <taxon>Acridomorpha</taxon>
        <taxon>Acridoidea</taxon>
        <taxon>Acrididae</taxon>
        <taxon>Cyrtacanthacridinae</taxon>
        <taxon>Schistocerca</taxon>
    </lineage>
</organism>
<keyword id="KW-0965">Cell junction</keyword>
<keyword id="KW-1003">Cell membrane</keyword>
<keyword id="KW-0303">Gap junction</keyword>
<keyword id="KW-0407">Ion channel</keyword>
<keyword id="KW-0406">Ion transport</keyword>
<keyword id="KW-0472">Membrane</keyword>
<keyword id="KW-0812">Transmembrane</keyword>
<keyword id="KW-1133">Transmembrane helix</keyword>
<keyword id="KW-0813">Transport</keyword>
<comment type="function">
    <text>Structural components of the gap junctions.</text>
</comment>
<comment type="subcellular location">
    <subcellularLocation>
        <location evidence="4">Cell membrane</location>
        <topology evidence="2">Multi-pass membrane protein</topology>
    </subcellularLocation>
    <subcellularLocation>
        <location>Cell junction</location>
        <location>Gap junction</location>
    </subcellularLocation>
</comment>
<comment type="tissue specificity">
    <text evidence="3">Widespread expression in embryo, in anterior and posterior row of neural precursors, midline precursors and in epithelial sheet of stomodeum.</text>
</comment>
<comment type="developmental stage">
    <text>Embryonic development.</text>
</comment>
<comment type="similarity">
    <text evidence="2">Belongs to the pannexin family.</text>
</comment>
<feature type="chain" id="PRO_0000208497" description="Innexin inx2">
    <location>
        <begin position="1"/>
        <end position="359"/>
    </location>
</feature>
<feature type="topological domain" description="Cytoplasmic" evidence="1">
    <location>
        <begin position="1"/>
        <end position="22"/>
    </location>
</feature>
<feature type="transmembrane region" description="Helical" evidence="2">
    <location>
        <begin position="23"/>
        <end position="43"/>
    </location>
</feature>
<feature type="topological domain" description="Extracellular" evidence="1">
    <location>
        <begin position="44"/>
        <end position="109"/>
    </location>
</feature>
<feature type="transmembrane region" description="Helical" evidence="2">
    <location>
        <begin position="110"/>
        <end position="130"/>
    </location>
</feature>
<feature type="topological domain" description="Cytoplasmic" evidence="1">
    <location>
        <begin position="131"/>
        <end position="180"/>
    </location>
</feature>
<feature type="transmembrane region" description="Helical" evidence="2">
    <location>
        <begin position="181"/>
        <end position="201"/>
    </location>
</feature>
<feature type="topological domain" description="Extracellular" evidence="1">
    <location>
        <begin position="202"/>
        <end position="266"/>
    </location>
</feature>
<feature type="transmembrane region" description="Helical" evidence="2">
    <location>
        <begin position="267"/>
        <end position="287"/>
    </location>
</feature>
<feature type="topological domain" description="Cytoplasmic" evidence="1">
    <location>
        <begin position="288"/>
        <end position="359"/>
    </location>
</feature>
<proteinExistence type="evidence at protein level"/>
<sequence length="359" mass="41446">MFDVFGSVKGLLKLDSVCIDNNLFRLHYKATVIILIAFSLLVTSRQYIGDPIDCIVDEIPLAVMDTYCWIYSTFTIPNRLNGKIGLEVAHPGVGAHVAGKDEVKYHKYYQWVCFVLFFQAILFYIPRYLWKTWEGGRIKMLVLDLNSPVVNEQSKADRKKLLVDYFATNLHTQNFYAYRFFICEALNFVNVVGQIYFMDLFLDGEFTTYGSDVVRFTEMEPEERSDPMSRVFPKVTKCTFHKYGPSGSVQTFDGLCVLPLNIVNEKIYVFLWFWFVILSVLTGIGLVYRLATAMGPQMRMYLLRARSRLAPQDQIETISNKCQIGDWFVLYQLGKNIDPLIYKELVADLAKKLEGKEIV</sequence>
<gene>
    <name type="primary">inx2</name>
</gene>
<dbReference type="EMBL" id="AF115854">
    <property type="protein sequence ID" value="AAD29306.1"/>
    <property type="molecule type" value="mRNA"/>
</dbReference>
<dbReference type="SMR" id="Q9XYN1"/>
<dbReference type="EnsemblMetazoa" id="XM_047128438.1">
    <property type="protein sequence ID" value="XP_046984394.1"/>
    <property type="gene ID" value="LOC124554789"/>
</dbReference>
<dbReference type="OrthoDB" id="5867527at2759"/>
<dbReference type="GO" id="GO:0005921">
    <property type="term" value="C:gap junction"/>
    <property type="evidence" value="ECO:0000314"/>
    <property type="project" value="UniProtKB"/>
</dbReference>
<dbReference type="GO" id="GO:0005886">
    <property type="term" value="C:plasma membrane"/>
    <property type="evidence" value="ECO:0000314"/>
    <property type="project" value="UniProtKB"/>
</dbReference>
<dbReference type="GO" id="GO:0005243">
    <property type="term" value="F:gap junction channel activity"/>
    <property type="evidence" value="ECO:0000304"/>
    <property type="project" value="UniProtKB"/>
</dbReference>
<dbReference type="GO" id="GO:0034220">
    <property type="term" value="P:monoatomic ion transmembrane transport"/>
    <property type="evidence" value="ECO:0007669"/>
    <property type="project" value="UniProtKB-KW"/>
</dbReference>
<dbReference type="GO" id="GO:0007602">
    <property type="term" value="P:phototransduction"/>
    <property type="evidence" value="ECO:0007669"/>
    <property type="project" value="TreeGrafter"/>
</dbReference>
<dbReference type="InterPro" id="IPR000990">
    <property type="entry name" value="Innexin"/>
</dbReference>
<dbReference type="PANTHER" id="PTHR11893">
    <property type="entry name" value="INNEXIN"/>
    <property type="match status" value="1"/>
</dbReference>
<dbReference type="PANTHER" id="PTHR11893:SF41">
    <property type="entry name" value="INNEXIN INX2"/>
    <property type="match status" value="1"/>
</dbReference>
<dbReference type="Pfam" id="PF00876">
    <property type="entry name" value="Innexin"/>
    <property type="match status" value="1"/>
</dbReference>
<dbReference type="PRINTS" id="PR01262">
    <property type="entry name" value="INNEXIN"/>
</dbReference>
<dbReference type="PROSITE" id="PS51013">
    <property type="entry name" value="PANNEXIN"/>
    <property type="match status" value="1"/>
</dbReference>
<accession>Q9XYN1</accession>
<protein>
    <recommendedName>
        <fullName>Innexin inx2</fullName>
        <shortName>Innexin-2</shortName>
    </recommendedName>
    <alternativeName>
        <fullName>G-Inx2</fullName>
    </alternativeName>
</protein>
<reference key="1">
    <citation type="journal article" date="1999" name="Dev. Genet.">
        <title>Developmental expression and molecular characterization of two gap junction channel proteins expressed during embryogenesis in the grasshopper Schistocerca americana.</title>
        <authorList>
            <person name="Ganfornina M.D."/>
            <person name="Sanchez D."/>
            <person name="Herrera M."/>
            <person name="Bastiani M.J."/>
        </authorList>
    </citation>
    <scope>NUCLEOTIDE SEQUENCE [MRNA]</scope>
    <scope>CHARACTERIZATION</scope>
    <scope>TISSUE SPECIFICITY</scope>
    <source>
        <tissue>Body wall</tissue>
        <tissue>Embryo</tissue>
        <tissue>Ventral nerve cord</tissue>
    </source>
</reference>
<name>INX2_SCHAM</name>
<evidence type="ECO:0000255" key="1"/>
<evidence type="ECO:0000255" key="2">
    <source>
        <dbReference type="PROSITE-ProRule" id="PRU00351"/>
    </source>
</evidence>
<evidence type="ECO:0000269" key="3">
    <source>
    </source>
</evidence>
<evidence type="ECO:0000305" key="4"/>